<comment type="function">
    <text evidence="4">May be involved in pre-mRNA splicing.</text>
</comment>
<comment type="catalytic activity">
    <reaction>
        <text>ATP + H2O = ADP + phosphate + H(+)</text>
        <dbReference type="Rhea" id="RHEA:13065"/>
        <dbReference type="ChEBI" id="CHEBI:15377"/>
        <dbReference type="ChEBI" id="CHEBI:15378"/>
        <dbReference type="ChEBI" id="CHEBI:30616"/>
        <dbReference type="ChEBI" id="CHEBI:43474"/>
        <dbReference type="ChEBI" id="CHEBI:456216"/>
        <dbReference type="EC" id="3.6.4.13"/>
    </reaction>
</comment>
<comment type="similarity">
    <text evidence="4">Belongs to the DEAD box helicase family. DEAH subfamily. PRP43 sub-subfamily.</text>
</comment>
<keyword id="KW-0067">ATP-binding</keyword>
<keyword id="KW-0347">Helicase</keyword>
<keyword id="KW-0378">Hydrolase</keyword>
<keyword id="KW-0507">mRNA processing</keyword>
<keyword id="KW-0508">mRNA splicing</keyword>
<keyword id="KW-0547">Nucleotide-binding</keyword>
<keyword id="KW-1185">Reference proteome</keyword>
<keyword id="KW-0747">Spliceosome</keyword>
<sequence length="726" mass="82694">MGTERKRKISLFDVMDDPSAPAKNAKTSGLPDGGINSLINKWNGKPYSQRYYDILEKRRTLPVWLQKEEFLKTLNNNQTLILVGETGSGKTTQIPQFVIDAVDAETSDKRRKWLVGCTQPRRVAAMSVSRRVAEEMDVTIGEEVGYSIRFEDCSSPRTVLKYLTDGMLLREAMADPLLERYKVIILDEAHERTLATDVLFGLLKEVLKNRPDLKLVVMSATLEAEKFQDYFSGAPLMKVPGRLHPVEIFYTQEPERDYLEAAIRTVVQIHMCEPPGDILVFLTGEEEIEDACRKINKEVGNLGDQVGPIKVVPLYSTLPPAMQQKIFDPAPEPVTEGGPPGRKIVVSTNIAETSLTIDGIVYVIDPGFAKQKVYNPRIRVESLLVSPISKASAHQRSGRAGRTRPGKCFRLYTEKSFNNDLQPQTYPEILRSNLANTVLTLKKLGIDDLVHFDFMDPPAPETLMRALEVLNYLGALDDDGNLTKTGEIMSEFPLDPQMAKMLIVSPEFNCSNEILSVSAMLSVPNCFIRPREAQKAADEAKARFGHIEGDHLTLLNVYHAFKQNNEDPNWCYENFINNRAMKSADNVRQQLVRIMSRFNLKMCSTDFNSRDYYINIRKAMLAGYFMQVAHLERTGHYLTVKDNQVVHLHPSNCLDHKPEWVIYNEYVLTSRNFIRTVTDIRGEWLVDVASHYYDLSNFPNCEAKRVIEKLYKKREREKEESKKNRK</sequence>
<feature type="chain" id="PRO_0000434933" description="Probable pre-mRNA-splicing factor ATP-dependent RNA helicase DEAH2">
    <location>
        <begin position="1"/>
        <end position="726"/>
    </location>
</feature>
<feature type="domain" description="Helicase ATP-binding" evidence="1">
    <location>
        <begin position="71"/>
        <end position="240"/>
    </location>
</feature>
<feature type="domain" description="Helicase C-terminal" evidence="2">
    <location>
        <begin position="265"/>
        <end position="445"/>
    </location>
</feature>
<feature type="short sequence motif" description="DEAH box" evidence="1">
    <location>
        <begin position="187"/>
        <end position="190"/>
    </location>
</feature>
<feature type="binding site" evidence="1">
    <location>
        <begin position="84"/>
        <end position="91"/>
    </location>
    <ligand>
        <name>ATP</name>
        <dbReference type="ChEBI" id="CHEBI:30616"/>
    </ligand>
</feature>
<reference key="1">
    <citation type="journal article" date="2000" name="Nature">
        <title>Sequence and analysis of chromosome 3 of the plant Arabidopsis thaliana.</title>
        <authorList>
            <person name="Salanoubat M."/>
            <person name="Lemcke K."/>
            <person name="Rieger M."/>
            <person name="Ansorge W."/>
            <person name="Unseld M."/>
            <person name="Fartmann B."/>
            <person name="Valle G."/>
            <person name="Bloecker H."/>
            <person name="Perez-Alonso M."/>
            <person name="Obermaier B."/>
            <person name="Delseny M."/>
            <person name="Boutry M."/>
            <person name="Grivell L.A."/>
            <person name="Mache R."/>
            <person name="Puigdomenech P."/>
            <person name="De Simone V."/>
            <person name="Choisne N."/>
            <person name="Artiguenave F."/>
            <person name="Robert C."/>
            <person name="Brottier P."/>
            <person name="Wincker P."/>
            <person name="Cattolico L."/>
            <person name="Weissenbach J."/>
            <person name="Saurin W."/>
            <person name="Quetier F."/>
            <person name="Schaefer M."/>
            <person name="Mueller-Auer S."/>
            <person name="Gabel C."/>
            <person name="Fuchs M."/>
            <person name="Benes V."/>
            <person name="Wurmbach E."/>
            <person name="Drzonek H."/>
            <person name="Erfle H."/>
            <person name="Jordan N."/>
            <person name="Bangert S."/>
            <person name="Wiedelmann R."/>
            <person name="Kranz H."/>
            <person name="Voss H."/>
            <person name="Holland R."/>
            <person name="Brandt P."/>
            <person name="Nyakatura G."/>
            <person name="Vezzi A."/>
            <person name="D'Angelo M."/>
            <person name="Pallavicini A."/>
            <person name="Toppo S."/>
            <person name="Simionati B."/>
            <person name="Conrad A."/>
            <person name="Hornischer K."/>
            <person name="Kauer G."/>
            <person name="Loehnert T.-H."/>
            <person name="Nordsiek G."/>
            <person name="Reichelt J."/>
            <person name="Scharfe M."/>
            <person name="Schoen O."/>
            <person name="Bargues M."/>
            <person name="Terol J."/>
            <person name="Climent J."/>
            <person name="Navarro P."/>
            <person name="Collado C."/>
            <person name="Perez-Perez A."/>
            <person name="Ottenwaelder B."/>
            <person name="Duchemin D."/>
            <person name="Cooke R."/>
            <person name="Laudie M."/>
            <person name="Berger-Llauro C."/>
            <person name="Purnelle B."/>
            <person name="Masuy D."/>
            <person name="de Haan M."/>
            <person name="Maarse A.C."/>
            <person name="Alcaraz J.-P."/>
            <person name="Cottet A."/>
            <person name="Casacuberta E."/>
            <person name="Monfort A."/>
            <person name="Argiriou A."/>
            <person name="Flores M."/>
            <person name="Liguori R."/>
            <person name="Vitale D."/>
            <person name="Mannhaupt G."/>
            <person name="Haase D."/>
            <person name="Schoof H."/>
            <person name="Rudd S."/>
            <person name="Zaccaria P."/>
            <person name="Mewes H.-W."/>
            <person name="Mayer K.F.X."/>
            <person name="Kaul S."/>
            <person name="Town C.D."/>
            <person name="Koo H.L."/>
            <person name="Tallon L.J."/>
            <person name="Jenkins J."/>
            <person name="Rooney T."/>
            <person name="Rizzo M."/>
            <person name="Walts A."/>
            <person name="Utterback T."/>
            <person name="Fujii C.Y."/>
            <person name="Shea T.P."/>
            <person name="Creasy T.H."/>
            <person name="Haas B."/>
            <person name="Maiti R."/>
            <person name="Wu D."/>
            <person name="Peterson J."/>
            <person name="Van Aken S."/>
            <person name="Pai G."/>
            <person name="Militscher J."/>
            <person name="Sellers P."/>
            <person name="Gill J.E."/>
            <person name="Feldblyum T.V."/>
            <person name="Preuss D."/>
            <person name="Lin X."/>
            <person name="Nierman W.C."/>
            <person name="Salzberg S.L."/>
            <person name="White O."/>
            <person name="Venter J.C."/>
            <person name="Fraser C.M."/>
            <person name="Kaneko T."/>
            <person name="Nakamura Y."/>
            <person name="Sato S."/>
            <person name="Kato T."/>
            <person name="Asamizu E."/>
            <person name="Sasamoto S."/>
            <person name="Kimura T."/>
            <person name="Idesawa K."/>
            <person name="Kawashima K."/>
            <person name="Kishida Y."/>
            <person name="Kiyokawa C."/>
            <person name="Kohara M."/>
            <person name="Matsumoto M."/>
            <person name="Matsuno A."/>
            <person name="Muraki A."/>
            <person name="Nakayama S."/>
            <person name="Nakazaki N."/>
            <person name="Shinpo S."/>
            <person name="Takeuchi C."/>
            <person name="Wada T."/>
            <person name="Watanabe A."/>
            <person name="Yamada M."/>
            <person name="Yasuda M."/>
            <person name="Tabata S."/>
        </authorList>
    </citation>
    <scope>NUCLEOTIDE SEQUENCE [LARGE SCALE GENOMIC DNA]</scope>
    <source>
        <strain>cv. Columbia</strain>
    </source>
</reference>
<reference key="2">
    <citation type="journal article" date="2017" name="Plant J.">
        <title>Araport11: a complete reannotation of the Arabidopsis thaliana reference genome.</title>
        <authorList>
            <person name="Cheng C.Y."/>
            <person name="Krishnakumar V."/>
            <person name="Chan A.P."/>
            <person name="Thibaud-Nissen F."/>
            <person name="Schobel S."/>
            <person name="Town C.D."/>
        </authorList>
    </citation>
    <scope>GENOME REANNOTATION</scope>
    <source>
        <strain>cv. Columbia</strain>
    </source>
</reference>
<reference key="3">
    <citation type="journal article" date="2003" name="Science">
        <title>Empirical analysis of transcriptional activity in the Arabidopsis genome.</title>
        <authorList>
            <person name="Yamada K."/>
            <person name="Lim J."/>
            <person name="Dale J.M."/>
            <person name="Chen H."/>
            <person name="Shinn P."/>
            <person name="Palm C.J."/>
            <person name="Southwick A.M."/>
            <person name="Wu H.C."/>
            <person name="Kim C.J."/>
            <person name="Nguyen M."/>
            <person name="Pham P.K."/>
            <person name="Cheuk R.F."/>
            <person name="Karlin-Newmann G."/>
            <person name="Liu S.X."/>
            <person name="Lam B."/>
            <person name="Sakano H."/>
            <person name="Wu T."/>
            <person name="Yu G."/>
            <person name="Miranda M."/>
            <person name="Quach H.L."/>
            <person name="Tripp M."/>
            <person name="Chang C.H."/>
            <person name="Lee J.M."/>
            <person name="Toriumi M.J."/>
            <person name="Chan M.M."/>
            <person name="Tang C.C."/>
            <person name="Onodera C.S."/>
            <person name="Deng J.M."/>
            <person name="Akiyama K."/>
            <person name="Ansari Y."/>
            <person name="Arakawa T."/>
            <person name="Banh J."/>
            <person name="Banno F."/>
            <person name="Bowser L."/>
            <person name="Brooks S.Y."/>
            <person name="Carninci P."/>
            <person name="Chao Q."/>
            <person name="Choy N."/>
            <person name="Enju A."/>
            <person name="Goldsmith A.D."/>
            <person name="Gurjal M."/>
            <person name="Hansen N.F."/>
            <person name="Hayashizaki Y."/>
            <person name="Johnson-Hopson C."/>
            <person name="Hsuan V.W."/>
            <person name="Iida K."/>
            <person name="Karnes M."/>
            <person name="Khan S."/>
            <person name="Koesema E."/>
            <person name="Ishida J."/>
            <person name="Jiang P.X."/>
            <person name="Jones T."/>
            <person name="Kawai J."/>
            <person name="Kamiya A."/>
            <person name="Meyers C."/>
            <person name="Nakajima M."/>
            <person name="Narusaka M."/>
            <person name="Seki M."/>
            <person name="Sakurai T."/>
            <person name="Satou M."/>
            <person name="Tamse R."/>
            <person name="Vaysberg M."/>
            <person name="Wallender E.K."/>
            <person name="Wong C."/>
            <person name="Yamamura Y."/>
            <person name="Yuan S."/>
            <person name="Shinozaki K."/>
            <person name="Davis R.W."/>
            <person name="Theologis A."/>
            <person name="Ecker J.R."/>
        </authorList>
    </citation>
    <scope>NUCLEOTIDE SEQUENCE [LARGE SCALE MRNA]</scope>
    <source>
        <strain>cv. Columbia</strain>
    </source>
</reference>
<reference key="4">
    <citation type="journal article" date="2006" name="Proc. Natl. Acad. Sci. U.S.A.">
        <title>Defective RNA processing enhances RNA silencing and influences flowering of Arabidopsis.</title>
        <authorList>
            <person name="Herr A.J."/>
            <person name="Molnar A."/>
            <person name="Jones A."/>
            <person name="Baulcombe D.C."/>
        </authorList>
    </citation>
    <scope>IDENTIFICATION</scope>
</reference>
<reference key="5">
    <citation type="journal article" date="2013" name="PLoS ONE">
        <title>Genome-wide comparative in silico analysis of the RNA helicase gene family in Zea mays and Glycine max: a comparison with Arabidopsis and Oryza sativa.</title>
        <authorList>
            <person name="Xu R."/>
            <person name="Zhang S."/>
            <person name="Huang J."/>
            <person name="Zheng C."/>
        </authorList>
    </citation>
    <scope>GENE FAMILY</scope>
</reference>
<evidence type="ECO:0000255" key="1">
    <source>
        <dbReference type="PROSITE-ProRule" id="PRU00541"/>
    </source>
</evidence>
<evidence type="ECO:0000255" key="2">
    <source>
        <dbReference type="PROSITE-ProRule" id="PRU00542"/>
    </source>
</evidence>
<evidence type="ECO:0000303" key="3">
    <source>
    </source>
</evidence>
<evidence type="ECO:0000305" key="4"/>
<evidence type="ECO:0000312" key="5">
    <source>
        <dbReference type="Araport" id="AT3G62310"/>
    </source>
</evidence>
<evidence type="ECO:0000312" key="6">
    <source>
        <dbReference type="EMBL" id="CAB82945.1"/>
    </source>
</evidence>
<name>DEAH2_ARATH</name>
<organism>
    <name type="scientific">Arabidopsis thaliana</name>
    <name type="common">Mouse-ear cress</name>
    <dbReference type="NCBI Taxonomy" id="3702"/>
    <lineage>
        <taxon>Eukaryota</taxon>
        <taxon>Viridiplantae</taxon>
        <taxon>Streptophyta</taxon>
        <taxon>Embryophyta</taxon>
        <taxon>Tracheophyta</taxon>
        <taxon>Spermatophyta</taxon>
        <taxon>Magnoliopsida</taxon>
        <taxon>eudicotyledons</taxon>
        <taxon>Gunneridae</taxon>
        <taxon>Pentapetalae</taxon>
        <taxon>rosids</taxon>
        <taxon>malvids</taxon>
        <taxon>Brassicales</taxon>
        <taxon>Brassicaceae</taxon>
        <taxon>Camelineae</taxon>
        <taxon>Arabidopsis</taxon>
    </lineage>
</organism>
<gene>
    <name evidence="5" type="ordered locus">At3g62310</name>
    <name evidence="6" type="ORF">T12C14_10</name>
</gene>
<protein>
    <recommendedName>
        <fullName evidence="4">Probable pre-mRNA-splicing factor ATP-dependent RNA helicase DEAH2</fullName>
        <ecNumber>3.6.4.13</ecNumber>
    </recommendedName>
    <alternativeName>
        <fullName evidence="3">DEAH RNA helicase homolog PRP43</fullName>
    </alternativeName>
</protein>
<dbReference type="EC" id="3.6.4.13"/>
<dbReference type="EMBL" id="AL162507">
    <property type="protein sequence ID" value="CAB82945.1"/>
    <property type="molecule type" value="Genomic_DNA"/>
</dbReference>
<dbReference type="EMBL" id="CP002686">
    <property type="protein sequence ID" value="AEE80337.1"/>
    <property type="molecule type" value="Genomic_DNA"/>
</dbReference>
<dbReference type="EMBL" id="AY120782">
    <property type="protein sequence ID" value="AAM53340.1"/>
    <property type="molecule type" value="mRNA"/>
</dbReference>
<dbReference type="EMBL" id="BT010331">
    <property type="protein sequence ID" value="AAQ56774.1"/>
    <property type="molecule type" value="mRNA"/>
</dbReference>
<dbReference type="PIR" id="T48023">
    <property type="entry name" value="T48023"/>
</dbReference>
<dbReference type="RefSeq" id="NP_191790.1">
    <property type="nucleotide sequence ID" value="NM_116096.5"/>
</dbReference>
<dbReference type="SMR" id="Q9LZQ9"/>
<dbReference type="FunCoup" id="Q9LZQ9">
    <property type="interactions" value="5066"/>
</dbReference>
<dbReference type="IntAct" id="Q9LZQ9">
    <property type="interactions" value="3"/>
</dbReference>
<dbReference type="STRING" id="3702.Q9LZQ9"/>
<dbReference type="iPTMnet" id="Q9LZQ9"/>
<dbReference type="PaxDb" id="3702-AT3G62310.1"/>
<dbReference type="ProteomicsDB" id="224617"/>
<dbReference type="EnsemblPlants" id="AT3G62310.1">
    <property type="protein sequence ID" value="AT3G62310.1"/>
    <property type="gene ID" value="AT3G62310"/>
</dbReference>
<dbReference type="GeneID" id="825404"/>
<dbReference type="Gramene" id="AT3G62310.1">
    <property type="protein sequence ID" value="AT3G62310.1"/>
    <property type="gene ID" value="AT3G62310"/>
</dbReference>
<dbReference type="KEGG" id="ath:AT3G62310"/>
<dbReference type="Araport" id="AT3G62310"/>
<dbReference type="TAIR" id="AT3G62310"/>
<dbReference type="eggNOG" id="KOG0925">
    <property type="taxonomic scope" value="Eukaryota"/>
</dbReference>
<dbReference type="HOGENOM" id="CLU_001832_5_11_1"/>
<dbReference type="InParanoid" id="Q9LZQ9"/>
<dbReference type="OMA" id="MKVYPLY"/>
<dbReference type="PhylomeDB" id="Q9LZQ9"/>
<dbReference type="CD-CODE" id="4299E36E">
    <property type="entry name" value="Nucleolus"/>
</dbReference>
<dbReference type="PRO" id="PR:Q9LZQ9"/>
<dbReference type="Proteomes" id="UP000006548">
    <property type="component" value="Chromosome 3"/>
</dbReference>
<dbReference type="ExpressionAtlas" id="Q9LZQ9">
    <property type="expression patterns" value="baseline and differential"/>
</dbReference>
<dbReference type="GO" id="GO:0005730">
    <property type="term" value="C:nucleolus"/>
    <property type="evidence" value="ECO:0007005"/>
    <property type="project" value="TAIR"/>
</dbReference>
<dbReference type="GO" id="GO:0005681">
    <property type="term" value="C:spliceosomal complex"/>
    <property type="evidence" value="ECO:0007669"/>
    <property type="project" value="UniProtKB-KW"/>
</dbReference>
<dbReference type="GO" id="GO:0005524">
    <property type="term" value="F:ATP binding"/>
    <property type="evidence" value="ECO:0007669"/>
    <property type="project" value="UniProtKB-KW"/>
</dbReference>
<dbReference type="GO" id="GO:0016887">
    <property type="term" value="F:ATP hydrolysis activity"/>
    <property type="evidence" value="ECO:0007669"/>
    <property type="project" value="RHEA"/>
</dbReference>
<dbReference type="GO" id="GO:0003729">
    <property type="term" value="F:mRNA binding"/>
    <property type="evidence" value="ECO:0000314"/>
    <property type="project" value="TAIR"/>
</dbReference>
<dbReference type="GO" id="GO:0003724">
    <property type="term" value="F:RNA helicase activity"/>
    <property type="evidence" value="ECO:0007669"/>
    <property type="project" value="UniProtKB-EC"/>
</dbReference>
<dbReference type="GO" id="GO:0006397">
    <property type="term" value="P:mRNA processing"/>
    <property type="evidence" value="ECO:0007669"/>
    <property type="project" value="UniProtKB-KW"/>
</dbReference>
<dbReference type="GO" id="GO:0008380">
    <property type="term" value="P:RNA splicing"/>
    <property type="evidence" value="ECO:0007669"/>
    <property type="project" value="UniProtKB-KW"/>
</dbReference>
<dbReference type="CDD" id="cd17973">
    <property type="entry name" value="DEXHc_DHX15"/>
    <property type="match status" value="1"/>
</dbReference>
<dbReference type="CDD" id="cd18791">
    <property type="entry name" value="SF2_C_RHA"/>
    <property type="match status" value="1"/>
</dbReference>
<dbReference type="FunFam" id="1.10.10.2130:FF:000001">
    <property type="entry name" value="Pre-mRNA-splicing factor ATP-dependent RNA helicase"/>
    <property type="match status" value="1"/>
</dbReference>
<dbReference type="FunFam" id="3.40.50.300:FF:000007">
    <property type="entry name" value="Pre-mRNA-splicing factor ATP-dependent RNA helicase"/>
    <property type="match status" value="1"/>
</dbReference>
<dbReference type="FunFam" id="1.20.120.1080:FF:000003">
    <property type="entry name" value="Pre-mRNA-splicing factor ATP-dependent RNA helicase PRP43"/>
    <property type="match status" value="1"/>
</dbReference>
<dbReference type="FunFam" id="3.40.50.300:FF:000951">
    <property type="entry name" value="Putative pre-mRNA-splicing factor ATP-dependent RNA helicase"/>
    <property type="match status" value="1"/>
</dbReference>
<dbReference type="Gene3D" id="1.20.120.1080">
    <property type="match status" value="1"/>
</dbReference>
<dbReference type="Gene3D" id="3.40.50.300">
    <property type="entry name" value="P-loop containing nucleotide triphosphate hydrolases"/>
    <property type="match status" value="2"/>
</dbReference>
<dbReference type="InterPro" id="IPR011709">
    <property type="entry name" value="DEAD-box_helicase_OB_fold"/>
</dbReference>
<dbReference type="InterPro" id="IPR011545">
    <property type="entry name" value="DEAD/DEAH_box_helicase_dom"/>
</dbReference>
<dbReference type="InterPro" id="IPR044756">
    <property type="entry name" value="DHX15_DEXHc"/>
</dbReference>
<dbReference type="InterPro" id="IPR048333">
    <property type="entry name" value="HA2_WH"/>
</dbReference>
<dbReference type="InterPro" id="IPR007502">
    <property type="entry name" value="Helicase-assoc_dom"/>
</dbReference>
<dbReference type="InterPro" id="IPR014001">
    <property type="entry name" value="Helicase_ATP-bd"/>
</dbReference>
<dbReference type="InterPro" id="IPR001650">
    <property type="entry name" value="Helicase_C-like"/>
</dbReference>
<dbReference type="InterPro" id="IPR027417">
    <property type="entry name" value="P-loop_NTPase"/>
</dbReference>
<dbReference type="PANTHER" id="PTHR18934">
    <property type="entry name" value="ATP-DEPENDENT RNA HELICASE"/>
    <property type="match status" value="1"/>
</dbReference>
<dbReference type="PANTHER" id="PTHR18934:SF109">
    <property type="entry name" value="ATP-DEPENDENT RNA HELICASE DHX15 HOMOLOG"/>
    <property type="match status" value="1"/>
</dbReference>
<dbReference type="Pfam" id="PF00270">
    <property type="entry name" value="DEAD"/>
    <property type="match status" value="1"/>
</dbReference>
<dbReference type="Pfam" id="PF21010">
    <property type="entry name" value="HA2_C"/>
    <property type="match status" value="1"/>
</dbReference>
<dbReference type="Pfam" id="PF04408">
    <property type="entry name" value="HA2_N"/>
    <property type="match status" value="1"/>
</dbReference>
<dbReference type="Pfam" id="PF00271">
    <property type="entry name" value="Helicase_C"/>
    <property type="match status" value="1"/>
</dbReference>
<dbReference type="Pfam" id="PF07717">
    <property type="entry name" value="OB_NTP_bind"/>
    <property type="match status" value="1"/>
</dbReference>
<dbReference type="SMART" id="SM00487">
    <property type="entry name" value="DEXDc"/>
    <property type="match status" value="1"/>
</dbReference>
<dbReference type="SMART" id="SM00847">
    <property type="entry name" value="HA2"/>
    <property type="match status" value="1"/>
</dbReference>
<dbReference type="SMART" id="SM00490">
    <property type="entry name" value="HELICc"/>
    <property type="match status" value="1"/>
</dbReference>
<dbReference type="SUPFAM" id="SSF52540">
    <property type="entry name" value="P-loop containing nucleoside triphosphate hydrolases"/>
    <property type="match status" value="1"/>
</dbReference>
<dbReference type="PROSITE" id="PS51192">
    <property type="entry name" value="HELICASE_ATP_BIND_1"/>
    <property type="match status" value="1"/>
</dbReference>
<dbReference type="PROSITE" id="PS51194">
    <property type="entry name" value="HELICASE_CTER"/>
    <property type="match status" value="1"/>
</dbReference>
<proteinExistence type="evidence at transcript level"/>
<accession>Q9LZQ9</accession>